<sequence>MDRLLASLDDAPIVDKDGYEYLVHPISNGVPMLDPALLREVVIEVMQTADLNVDKIVAPEAMGIHLATAVSLQTDIPLVVIRKREYGLEGEVSLHQETGYSESEMYINDVEPGDRVVIIDDMLSTGGTLASICTALDDIGADISDIVVVMRKVGPSALDDTEFDATSLIDITVEDGEVVVH</sequence>
<reference key="1">
    <citation type="journal article" date="2012" name="BMC Genomics">
        <title>A comparative genomics perspective on the genetic content of the alkaliphilic haloarchaeon Natrialba magadii ATCC 43099T.</title>
        <authorList>
            <person name="Siddaramappa S."/>
            <person name="Challacombe J.F."/>
            <person name="Decastro R.E."/>
            <person name="Pfeiffer F."/>
            <person name="Sastre D.E."/>
            <person name="Gimenez M.I."/>
            <person name="Paggi R.A."/>
            <person name="Detter J.C."/>
            <person name="Davenport K.W."/>
            <person name="Goodwin L.A."/>
            <person name="Kyrpides N."/>
            <person name="Tapia R."/>
            <person name="Pitluck S."/>
            <person name="Lucas S."/>
            <person name="Woyke T."/>
            <person name="Maupin-Furlow J.A."/>
        </authorList>
    </citation>
    <scope>NUCLEOTIDE SEQUENCE [LARGE SCALE GENOMIC DNA]</scope>
    <source>
        <strain>ATCC 43099 / DSM 3394 / CCM 3739 / CIP 104546 / IAM 13178 / JCM 8861 / NBRC 102185 / NCIMB 2190 / MS3</strain>
    </source>
</reference>
<keyword id="KW-0660">Purine salvage</keyword>
<keyword id="KW-1185">Reference proteome</keyword>
<keyword id="KW-0808">Transferase</keyword>
<protein>
    <recommendedName>
        <fullName evidence="1">HGPRTase-like protein 2</fullName>
        <ecNumber evidence="1">2.4.2.-</ecNumber>
    </recommendedName>
</protein>
<feature type="chain" id="PRO_0000415489" description="HGPRTase-like protein 2">
    <location>
        <begin position="1"/>
        <end position="181"/>
    </location>
</feature>
<organism>
    <name type="scientific">Natrialba magadii (strain ATCC 43099 / DSM 3394 / CCM 3739 / CIP 104546 / IAM 13178 / JCM 8861 / NBRC 102185 / NCIMB 2190 / MS3)</name>
    <name type="common">Natronobacterium magadii</name>
    <dbReference type="NCBI Taxonomy" id="547559"/>
    <lineage>
        <taxon>Archaea</taxon>
        <taxon>Methanobacteriati</taxon>
        <taxon>Methanobacteriota</taxon>
        <taxon>Stenosarchaea group</taxon>
        <taxon>Halobacteria</taxon>
        <taxon>Halobacteriales</taxon>
        <taxon>Natrialbaceae</taxon>
        <taxon>Natrialba</taxon>
    </lineage>
</organism>
<gene>
    <name type="ordered locus">Nmag_3110</name>
</gene>
<accession>D3SRA6</accession>
<dbReference type="EC" id="2.4.2.-" evidence="1"/>
<dbReference type="EMBL" id="CP001932">
    <property type="protein sequence ID" value="ADD06662.1"/>
    <property type="molecule type" value="Genomic_DNA"/>
</dbReference>
<dbReference type="RefSeq" id="WP_004214612.1">
    <property type="nucleotide sequence ID" value="NC_013922.1"/>
</dbReference>
<dbReference type="SMR" id="D3SRA6"/>
<dbReference type="STRING" id="547559.Nmag_3110"/>
<dbReference type="PaxDb" id="547559-Nmag_3110"/>
<dbReference type="GeneID" id="8825970"/>
<dbReference type="KEGG" id="nmg:Nmag_3110"/>
<dbReference type="eggNOG" id="arCOG00030">
    <property type="taxonomic scope" value="Archaea"/>
</dbReference>
<dbReference type="HOGENOM" id="CLU_126376_0_0_2"/>
<dbReference type="OrthoDB" id="8323at2157"/>
<dbReference type="Proteomes" id="UP000001879">
    <property type="component" value="Chromosome"/>
</dbReference>
<dbReference type="GO" id="GO:0016740">
    <property type="term" value="F:transferase activity"/>
    <property type="evidence" value="ECO:0007669"/>
    <property type="project" value="UniProtKB-KW"/>
</dbReference>
<dbReference type="GO" id="GO:0006166">
    <property type="term" value="P:purine ribonucleoside salvage"/>
    <property type="evidence" value="ECO:0007669"/>
    <property type="project" value="UniProtKB-KW"/>
</dbReference>
<dbReference type="CDD" id="cd06223">
    <property type="entry name" value="PRTases_typeI"/>
    <property type="match status" value="1"/>
</dbReference>
<dbReference type="Gene3D" id="3.40.50.2020">
    <property type="match status" value="1"/>
</dbReference>
<dbReference type="HAMAP" id="MF_01467">
    <property type="entry name" value="Hypx_phosphoribosyltr"/>
    <property type="match status" value="1"/>
</dbReference>
<dbReference type="InterPro" id="IPR026597">
    <property type="entry name" value="HGPRTase-like"/>
</dbReference>
<dbReference type="InterPro" id="IPR000836">
    <property type="entry name" value="PRibTrfase_dom"/>
</dbReference>
<dbReference type="InterPro" id="IPR029057">
    <property type="entry name" value="PRTase-like"/>
</dbReference>
<dbReference type="InterPro" id="IPR050118">
    <property type="entry name" value="Pur/Pyrimidine_PRTase"/>
</dbReference>
<dbReference type="NCBIfam" id="NF040646">
    <property type="entry name" value="HPT_Archaea"/>
    <property type="match status" value="1"/>
</dbReference>
<dbReference type="NCBIfam" id="NF002635">
    <property type="entry name" value="PRK02304.1-4"/>
    <property type="match status" value="1"/>
</dbReference>
<dbReference type="PANTHER" id="PTHR43864">
    <property type="entry name" value="HYPOXANTHINE/GUANINE PHOSPHORIBOSYLTRANSFERASE"/>
    <property type="match status" value="1"/>
</dbReference>
<dbReference type="PANTHER" id="PTHR43864:SF1">
    <property type="entry name" value="XANTHINE PHOSPHORIBOSYLTRANSFERASE"/>
    <property type="match status" value="1"/>
</dbReference>
<dbReference type="Pfam" id="PF00156">
    <property type="entry name" value="Pribosyltran"/>
    <property type="match status" value="1"/>
</dbReference>
<dbReference type="SUPFAM" id="SSF53271">
    <property type="entry name" value="PRTase-like"/>
    <property type="match status" value="1"/>
</dbReference>
<dbReference type="PROSITE" id="PS00103">
    <property type="entry name" value="PUR_PYR_PR_TRANSFER"/>
    <property type="match status" value="1"/>
</dbReference>
<proteinExistence type="inferred from homology"/>
<name>HPRL2_NATMM</name>
<evidence type="ECO:0000255" key="1">
    <source>
        <dbReference type="HAMAP-Rule" id="MF_01467"/>
    </source>
</evidence>
<comment type="function">
    <text evidence="1">May catalyze a purine salvage reaction, the substrate is unknown.</text>
</comment>
<comment type="similarity">
    <text evidence="1">Belongs to the purine/pyrimidine phosphoribosyltransferase family. Archaeal HPRT subfamily.</text>
</comment>